<dbReference type="EMBL" id="CP000826">
    <property type="protein sequence ID" value="ABV41005.1"/>
    <property type="molecule type" value="Genomic_DNA"/>
</dbReference>
<dbReference type="SMR" id="A8GD15"/>
<dbReference type="STRING" id="399741.Spro_1902"/>
<dbReference type="KEGG" id="spe:Spro_1902"/>
<dbReference type="eggNOG" id="COG0333">
    <property type="taxonomic scope" value="Bacteria"/>
</dbReference>
<dbReference type="HOGENOM" id="CLU_129084_2_1_6"/>
<dbReference type="OrthoDB" id="9801927at2"/>
<dbReference type="GO" id="GO:0015934">
    <property type="term" value="C:large ribosomal subunit"/>
    <property type="evidence" value="ECO:0007669"/>
    <property type="project" value="InterPro"/>
</dbReference>
<dbReference type="GO" id="GO:0003735">
    <property type="term" value="F:structural constituent of ribosome"/>
    <property type="evidence" value="ECO:0007669"/>
    <property type="project" value="InterPro"/>
</dbReference>
<dbReference type="GO" id="GO:0006412">
    <property type="term" value="P:translation"/>
    <property type="evidence" value="ECO:0007669"/>
    <property type="project" value="UniProtKB-UniRule"/>
</dbReference>
<dbReference type="HAMAP" id="MF_00340">
    <property type="entry name" value="Ribosomal_bL32"/>
    <property type="match status" value="1"/>
</dbReference>
<dbReference type="InterPro" id="IPR002677">
    <property type="entry name" value="Ribosomal_bL32"/>
</dbReference>
<dbReference type="InterPro" id="IPR044957">
    <property type="entry name" value="Ribosomal_bL32_bact"/>
</dbReference>
<dbReference type="InterPro" id="IPR011332">
    <property type="entry name" value="Ribosomal_zn-bd"/>
</dbReference>
<dbReference type="NCBIfam" id="TIGR01031">
    <property type="entry name" value="rpmF_bact"/>
    <property type="match status" value="1"/>
</dbReference>
<dbReference type="PANTHER" id="PTHR35534">
    <property type="entry name" value="50S RIBOSOMAL PROTEIN L32"/>
    <property type="match status" value="1"/>
</dbReference>
<dbReference type="PANTHER" id="PTHR35534:SF1">
    <property type="entry name" value="LARGE RIBOSOMAL SUBUNIT PROTEIN BL32"/>
    <property type="match status" value="1"/>
</dbReference>
<dbReference type="Pfam" id="PF01783">
    <property type="entry name" value="Ribosomal_L32p"/>
    <property type="match status" value="1"/>
</dbReference>
<dbReference type="SUPFAM" id="SSF57829">
    <property type="entry name" value="Zn-binding ribosomal proteins"/>
    <property type="match status" value="1"/>
</dbReference>
<sequence length="55" mass="6146">MAVQQNKPTRSKRGMRRSHDALTTATLSVDKASGETHLRHHITADGFYRGRKVIG</sequence>
<evidence type="ECO:0000255" key="1">
    <source>
        <dbReference type="HAMAP-Rule" id="MF_00340"/>
    </source>
</evidence>
<evidence type="ECO:0000256" key="2">
    <source>
        <dbReference type="SAM" id="MobiDB-lite"/>
    </source>
</evidence>
<evidence type="ECO:0000305" key="3"/>
<organism>
    <name type="scientific">Serratia proteamaculans (strain 568)</name>
    <dbReference type="NCBI Taxonomy" id="399741"/>
    <lineage>
        <taxon>Bacteria</taxon>
        <taxon>Pseudomonadati</taxon>
        <taxon>Pseudomonadota</taxon>
        <taxon>Gammaproteobacteria</taxon>
        <taxon>Enterobacterales</taxon>
        <taxon>Yersiniaceae</taxon>
        <taxon>Serratia</taxon>
    </lineage>
</organism>
<keyword id="KW-0687">Ribonucleoprotein</keyword>
<keyword id="KW-0689">Ribosomal protein</keyword>
<proteinExistence type="inferred from homology"/>
<accession>A8GD15</accession>
<protein>
    <recommendedName>
        <fullName evidence="1">Large ribosomal subunit protein bL32</fullName>
    </recommendedName>
    <alternativeName>
        <fullName evidence="3">50S ribosomal protein L32</fullName>
    </alternativeName>
</protein>
<name>RL32_SERP5</name>
<feature type="chain" id="PRO_1000059823" description="Large ribosomal subunit protein bL32">
    <location>
        <begin position="1"/>
        <end position="55"/>
    </location>
</feature>
<feature type="region of interest" description="Disordered" evidence="2">
    <location>
        <begin position="1"/>
        <end position="28"/>
    </location>
</feature>
<reference key="1">
    <citation type="submission" date="2007-09" db="EMBL/GenBank/DDBJ databases">
        <title>Complete sequence of chromosome of Serratia proteamaculans 568.</title>
        <authorList>
            <consortium name="US DOE Joint Genome Institute"/>
            <person name="Copeland A."/>
            <person name="Lucas S."/>
            <person name="Lapidus A."/>
            <person name="Barry K."/>
            <person name="Glavina del Rio T."/>
            <person name="Dalin E."/>
            <person name="Tice H."/>
            <person name="Pitluck S."/>
            <person name="Chain P."/>
            <person name="Malfatti S."/>
            <person name="Shin M."/>
            <person name="Vergez L."/>
            <person name="Schmutz J."/>
            <person name="Larimer F."/>
            <person name="Land M."/>
            <person name="Hauser L."/>
            <person name="Kyrpides N."/>
            <person name="Kim E."/>
            <person name="Taghavi S."/>
            <person name="Newman L."/>
            <person name="Vangronsveld J."/>
            <person name="van der Lelie D."/>
            <person name="Richardson P."/>
        </authorList>
    </citation>
    <scope>NUCLEOTIDE SEQUENCE [LARGE SCALE GENOMIC DNA]</scope>
    <source>
        <strain>568</strain>
    </source>
</reference>
<gene>
    <name evidence="1" type="primary">rpmF</name>
    <name type="ordered locus">Spro_1902</name>
</gene>
<comment type="similarity">
    <text evidence="1">Belongs to the bacterial ribosomal protein bL32 family.</text>
</comment>